<gene>
    <name evidence="1" type="primary">rpsM</name>
    <name evidence="1" type="synonym">rps13</name>
    <name type="ordered locus">PMT9312_1630</name>
</gene>
<comment type="function">
    <text evidence="1">Located at the top of the head of the 30S subunit, it contacts several helices of the 16S rRNA. In the 70S ribosome it contacts the 23S rRNA (bridge B1a) and protein L5 of the 50S subunit (bridge B1b), connecting the 2 subunits; these bridges are implicated in subunit movement. Contacts the tRNAs in the A and P-sites.</text>
</comment>
<comment type="subunit">
    <text evidence="1">Part of the 30S ribosomal subunit. Forms a loose heterodimer with protein S19. Forms two bridges to the 50S subunit in the 70S ribosome.</text>
</comment>
<comment type="similarity">
    <text evidence="1">Belongs to the universal ribosomal protein uS13 family.</text>
</comment>
<organism>
    <name type="scientific">Prochlorococcus marinus (strain MIT 9312)</name>
    <dbReference type="NCBI Taxonomy" id="74546"/>
    <lineage>
        <taxon>Bacteria</taxon>
        <taxon>Bacillati</taxon>
        <taxon>Cyanobacteriota</taxon>
        <taxon>Cyanophyceae</taxon>
        <taxon>Synechococcales</taxon>
        <taxon>Prochlorococcaceae</taxon>
        <taxon>Prochlorococcus</taxon>
    </lineage>
</organism>
<feature type="chain" id="PRO_0000230545" description="Small ribosomal subunit protein uS13">
    <location>
        <begin position="1"/>
        <end position="121"/>
    </location>
</feature>
<feature type="region of interest" description="Disordered" evidence="2">
    <location>
        <begin position="91"/>
        <end position="121"/>
    </location>
</feature>
<feature type="compositionally biased region" description="Basic residues" evidence="2">
    <location>
        <begin position="100"/>
        <end position="121"/>
    </location>
</feature>
<accession>Q318K5</accession>
<dbReference type="EMBL" id="CP000111">
    <property type="protein sequence ID" value="ABB50690.1"/>
    <property type="molecule type" value="Genomic_DNA"/>
</dbReference>
<dbReference type="RefSeq" id="WP_011377172.1">
    <property type="nucleotide sequence ID" value="NC_007577.1"/>
</dbReference>
<dbReference type="SMR" id="Q318K5"/>
<dbReference type="STRING" id="74546.PMT9312_1630"/>
<dbReference type="KEGG" id="pmi:PMT9312_1630"/>
<dbReference type="eggNOG" id="COG0099">
    <property type="taxonomic scope" value="Bacteria"/>
</dbReference>
<dbReference type="HOGENOM" id="CLU_103849_1_2_3"/>
<dbReference type="OrthoDB" id="9803610at2"/>
<dbReference type="Proteomes" id="UP000002715">
    <property type="component" value="Chromosome"/>
</dbReference>
<dbReference type="GO" id="GO:0005829">
    <property type="term" value="C:cytosol"/>
    <property type="evidence" value="ECO:0007669"/>
    <property type="project" value="TreeGrafter"/>
</dbReference>
<dbReference type="GO" id="GO:0015935">
    <property type="term" value="C:small ribosomal subunit"/>
    <property type="evidence" value="ECO:0007669"/>
    <property type="project" value="TreeGrafter"/>
</dbReference>
<dbReference type="GO" id="GO:0019843">
    <property type="term" value="F:rRNA binding"/>
    <property type="evidence" value="ECO:0007669"/>
    <property type="project" value="UniProtKB-UniRule"/>
</dbReference>
<dbReference type="GO" id="GO:0003735">
    <property type="term" value="F:structural constituent of ribosome"/>
    <property type="evidence" value="ECO:0007669"/>
    <property type="project" value="InterPro"/>
</dbReference>
<dbReference type="GO" id="GO:0000049">
    <property type="term" value="F:tRNA binding"/>
    <property type="evidence" value="ECO:0007669"/>
    <property type="project" value="UniProtKB-UniRule"/>
</dbReference>
<dbReference type="GO" id="GO:0006412">
    <property type="term" value="P:translation"/>
    <property type="evidence" value="ECO:0007669"/>
    <property type="project" value="UniProtKB-UniRule"/>
</dbReference>
<dbReference type="FunFam" id="1.10.8.50:FF:000001">
    <property type="entry name" value="30S ribosomal protein S13"/>
    <property type="match status" value="1"/>
</dbReference>
<dbReference type="Gene3D" id="1.10.8.50">
    <property type="match status" value="1"/>
</dbReference>
<dbReference type="Gene3D" id="4.10.910.10">
    <property type="entry name" value="30s ribosomal protein s13, domain 2"/>
    <property type="match status" value="1"/>
</dbReference>
<dbReference type="HAMAP" id="MF_01315">
    <property type="entry name" value="Ribosomal_uS13"/>
    <property type="match status" value="1"/>
</dbReference>
<dbReference type="InterPro" id="IPR027437">
    <property type="entry name" value="Rbsml_uS13_C"/>
</dbReference>
<dbReference type="InterPro" id="IPR001892">
    <property type="entry name" value="Ribosomal_uS13"/>
</dbReference>
<dbReference type="InterPro" id="IPR010979">
    <property type="entry name" value="Ribosomal_uS13-like_H2TH"/>
</dbReference>
<dbReference type="InterPro" id="IPR019980">
    <property type="entry name" value="Ribosomal_uS13_bac-type"/>
</dbReference>
<dbReference type="InterPro" id="IPR018269">
    <property type="entry name" value="Ribosomal_uS13_CS"/>
</dbReference>
<dbReference type="NCBIfam" id="TIGR03631">
    <property type="entry name" value="uS13_bact"/>
    <property type="match status" value="1"/>
</dbReference>
<dbReference type="PANTHER" id="PTHR10871">
    <property type="entry name" value="30S RIBOSOMAL PROTEIN S13/40S RIBOSOMAL PROTEIN S18"/>
    <property type="match status" value="1"/>
</dbReference>
<dbReference type="PANTHER" id="PTHR10871:SF1">
    <property type="entry name" value="SMALL RIBOSOMAL SUBUNIT PROTEIN US13M"/>
    <property type="match status" value="1"/>
</dbReference>
<dbReference type="Pfam" id="PF00416">
    <property type="entry name" value="Ribosomal_S13"/>
    <property type="match status" value="1"/>
</dbReference>
<dbReference type="PIRSF" id="PIRSF002134">
    <property type="entry name" value="Ribosomal_S13"/>
    <property type="match status" value="1"/>
</dbReference>
<dbReference type="SUPFAM" id="SSF46946">
    <property type="entry name" value="S13-like H2TH domain"/>
    <property type="match status" value="1"/>
</dbReference>
<dbReference type="PROSITE" id="PS00646">
    <property type="entry name" value="RIBOSOMAL_S13_1"/>
    <property type="match status" value="1"/>
</dbReference>
<dbReference type="PROSITE" id="PS50159">
    <property type="entry name" value="RIBOSOMAL_S13_2"/>
    <property type="match status" value="1"/>
</dbReference>
<keyword id="KW-0687">Ribonucleoprotein</keyword>
<keyword id="KW-0689">Ribosomal protein</keyword>
<keyword id="KW-0694">RNA-binding</keyword>
<keyword id="KW-0699">rRNA-binding</keyword>
<keyword id="KW-0820">tRNA-binding</keyword>
<name>RS13_PROM9</name>
<evidence type="ECO:0000255" key="1">
    <source>
        <dbReference type="HAMAP-Rule" id="MF_01315"/>
    </source>
</evidence>
<evidence type="ECO:0000256" key="2">
    <source>
        <dbReference type="SAM" id="MobiDB-lite"/>
    </source>
</evidence>
<evidence type="ECO:0000305" key="3"/>
<proteinExistence type="inferred from homology"/>
<protein>
    <recommendedName>
        <fullName evidence="1">Small ribosomal subunit protein uS13</fullName>
    </recommendedName>
    <alternativeName>
        <fullName evidence="3">30S ribosomal protein S13</fullName>
    </alternativeName>
</protein>
<sequence>MARIAGIDIPREKRVEIALTYVYGIGLTRSKLILANAGVNPDIRVKDLSDSDVQKLRGATEEFTLEGDLRRKEGMALKRLQDIGCVRGRRHRMSLPVRGQRTRTNARTRRGSRKTVAGRKK</sequence>
<reference key="1">
    <citation type="journal article" date="2006" name="Science">
        <title>Genomic islands and the ecology and evolution of Prochlorococcus.</title>
        <authorList>
            <person name="Coleman M.L."/>
            <person name="Sullivan M.B."/>
            <person name="Martiny A.C."/>
            <person name="Steglich C."/>
            <person name="Barry K."/>
            <person name="Delong E.F."/>
            <person name="Chisholm S.W."/>
        </authorList>
    </citation>
    <scope>NUCLEOTIDE SEQUENCE [LARGE SCALE GENOMIC DNA]</scope>
    <source>
        <strain>MIT 9312</strain>
    </source>
</reference>